<protein>
    <recommendedName>
        <fullName evidence="1">Bifunctional glutamine synthetase adenylyltransferase/adenylyl-removing enzyme</fullName>
    </recommendedName>
    <alternativeName>
        <fullName evidence="1">ATP:glutamine synthetase adenylyltransferase</fullName>
    </alternativeName>
    <alternativeName>
        <fullName evidence="1">ATase</fullName>
    </alternativeName>
    <domain>
        <recommendedName>
            <fullName evidence="1">Glutamine synthetase adenylyl-L-tyrosine phosphorylase</fullName>
            <ecNumber evidence="1">2.7.7.89</ecNumber>
        </recommendedName>
        <alternativeName>
            <fullName evidence="1">Adenylyl removase</fullName>
            <shortName evidence="1">AR</shortName>
            <shortName evidence="1">AT-N</shortName>
        </alternativeName>
    </domain>
    <domain>
        <recommendedName>
            <fullName evidence="1">Glutamine synthetase adenylyl transferase</fullName>
            <ecNumber evidence="1">2.7.7.42</ecNumber>
        </recommendedName>
        <alternativeName>
            <fullName evidence="1">Adenylyl transferase</fullName>
            <shortName evidence="1">AT</shortName>
            <shortName evidence="1">AT-C</shortName>
        </alternativeName>
    </domain>
</protein>
<dbReference type="EC" id="2.7.7.89" evidence="1"/>
<dbReference type="EC" id="2.7.7.42" evidence="1"/>
<dbReference type="EMBL" id="CP000961">
    <property type="protein sequence ID" value="ACA85022.1"/>
    <property type="molecule type" value="Genomic_DNA"/>
</dbReference>
<dbReference type="RefSeq" id="WP_012323369.1">
    <property type="nucleotide sequence ID" value="NC_010506.1"/>
</dbReference>
<dbReference type="SMR" id="B1KE36"/>
<dbReference type="STRING" id="392500.Swoo_0727"/>
<dbReference type="KEGG" id="swd:Swoo_0727"/>
<dbReference type="eggNOG" id="COG1391">
    <property type="taxonomic scope" value="Bacteria"/>
</dbReference>
<dbReference type="HOGENOM" id="CLU_006233_0_1_6"/>
<dbReference type="Proteomes" id="UP000002168">
    <property type="component" value="Chromosome"/>
</dbReference>
<dbReference type="GO" id="GO:0005829">
    <property type="term" value="C:cytosol"/>
    <property type="evidence" value="ECO:0007669"/>
    <property type="project" value="TreeGrafter"/>
</dbReference>
<dbReference type="GO" id="GO:0008882">
    <property type="term" value="F:[glutamate-ammonia-ligase] adenylyltransferase activity"/>
    <property type="evidence" value="ECO:0007669"/>
    <property type="project" value="UniProtKB-UniRule"/>
</dbReference>
<dbReference type="GO" id="GO:0047388">
    <property type="term" value="F:[glutamine synthetase]-adenylyl-L-tyrosine phosphorylase activity"/>
    <property type="evidence" value="ECO:0007669"/>
    <property type="project" value="UniProtKB-EC"/>
</dbReference>
<dbReference type="GO" id="GO:0005524">
    <property type="term" value="F:ATP binding"/>
    <property type="evidence" value="ECO:0007669"/>
    <property type="project" value="UniProtKB-UniRule"/>
</dbReference>
<dbReference type="GO" id="GO:0000287">
    <property type="term" value="F:magnesium ion binding"/>
    <property type="evidence" value="ECO:0007669"/>
    <property type="project" value="UniProtKB-UniRule"/>
</dbReference>
<dbReference type="GO" id="GO:0000820">
    <property type="term" value="P:regulation of glutamine family amino acid metabolic process"/>
    <property type="evidence" value="ECO:0007669"/>
    <property type="project" value="UniProtKB-UniRule"/>
</dbReference>
<dbReference type="CDD" id="cd05401">
    <property type="entry name" value="NT_GlnE_GlnD_like"/>
    <property type="match status" value="2"/>
</dbReference>
<dbReference type="FunFam" id="1.20.120.1510:FF:000001">
    <property type="entry name" value="Bifunctional glutamine synthetase adenylyltransferase/adenylyl-removing enzyme"/>
    <property type="match status" value="1"/>
</dbReference>
<dbReference type="FunFam" id="1.20.120.330:FF:000005">
    <property type="entry name" value="Bifunctional glutamine synthetase adenylyltransferase/adenylyl-removing enzyme"/>
    <property type="match status" value="1"/>
</dbReference>
<dbReference type="FunFam" id="3.30.460.10:FF:000009">
    <property type="entry name" value="Bifunctional glutamine synthetase adenylyltransferase/adenylyl-removing enzyme"/>
    <property type="match status" value="1"/>
</dbReference>
<dbReference type="FunFam" id="3.30.460.10:FF:000014">
    <property type="entry name" value="Bifunctional glutamine synthetase adenylyltransferase/adenylyl-removing enzyme"/>
    <property type="match status" value="1"/>
</dbReference>
<dbReference type="Gene3D" id="1.20.120.1510">
    <property type="match status" value="1"/>
</dbReference>
<dbReference type="Gene3D" id="3.30.460.10">
    <property type="entry name" value="Beta Polymerase, domain 2"/>
    <property type="match status" value="2"/>
</dbReference>
<dbReference type="Gene3D" id="1.10.4050.10">
    <property type="entry name" value="Glutamine synthase adenylyltransferase GlnE"/>
    <property type="match status" value="1"/>
</dbReference>
<dbReference type="Gene3D" id="1.20.120.330">
    <property type="entry name" value="Nucleotidyltransferases domain 2"/>
    <property type="match status" value="2"/>
</dbReference>
<dbReference type="HAMAP" id="MF_00802">
    <property type="entry name" value="GlnE"/>
    <property type="match status" value="1"/>
</dbReference>
<dbReference type="InterPro" id="IPR023057">
    <property type="entry name" value="GlnE"/>
</dbReference>
<dbReference type="InterPro" id="IPR005190">
    <property type="entry name" value="GlnE_rpt_dom"/>
</dbReference>
<dbReference type="InterPro" id="IPR043519">
    <property type="entry name" value="NT_sf"/>
</dbReference>
<dbReference type="InterPro" id="IPR013546">
    <property type="entry name" value="PII_UdlTrfase/GS_AdlTrfase"/>
</dbReference>
<dbReference type="NCBIfam" id="NF008292">
    <property type="entry name" value="PRK11072.1"/>
    <property type="match status" value="1"/>
</dbReference>
<dbReference type="PANTHER" id="PTHR30621:SF0">
    <property type="entry name" value="BIFUNCTIONAL GLUTAMINE SYNTHETASE ADENYLYLTRANSFERASE_ADENYLYL-REMOVING ENZYME"/>
    <property type="match status" value="1"/>
</dbReference>
<dbReference type="PANTHER" id="PTHR30621">
    <property type="entry name" value="GLUTAMINE SYNTHETASE ADENYLYLTRANSFERASE"/>
    <property type="match status" value="1"/>
</dbReference>
<dbReference type="Pfam" id="PF08335">
    <property type="entry name" value="GlnD_UR_UTase"/>
    <property type="match status" value="2"/>
</dbReference>
<dbReference type="Pfam" id="PF03710">
    <property type="entry name" value="GlnE"/>
    <property type="match status" value="2"/>
</dbReference>
<dbReference type="SUPFAM" id="SSF81301">
    <property type="entry name" value="Nucleotidyltransferase"/>
    <property type="match status" value="2"/>
</dbReference>
<dbReference type="SUPFAM" id="SSF81593">
    <property type="entry name" value="Nucleotidyltransferase substrate binding subunit/domain"/>
    <property type="match status" value="2"/>
</dbReference>
<accession>B1KE36</accession>
<gene>
    <name evidence="1" type="primary">glnE</name>
    <name type="ordered locus">Swoo_0727</name>
</gene>
<sequence length="954" mass="109177">MENISNKPLSAIISEVADRYWQRINDVFPELANELTKEQGEELYRIMGLSDFIADQLCRHPQWILSLFNGELNNLSRSEFDKDLHGLLSECQSEDEANRVLRCYRNKQMVRLAWRDFLGYASLENSLLDLSALAEALIISARDWLYIQACKQYGTPMDSEGNPQPLIILGMGKLGGRELNFSSDIDLIFTFPEHGETQGGRRAIENQQFFIRMGQRLVNMLHQVTVDGFVYRVDMRLRPYGESGPLVVSFSGLEDYYQEQGRDWERYAMVKARALGPWTAFSDELHSMLRPFVYRRYIDFSAIESLRKMKQLITQEVRRRQLTDNIKLGAGGIREVEFVVQSFQLIRGGREPSLRQQSLFAAIDTLYQLGQLEYLAVDELKQSYLLLRRVENLLQGIGDQQTQTLPDSGLNWYRLCHCMGMASEAELRTHIESAMSKIHRHFIETVGGRTQDEGADLWTQQLWIAYEDDDAQTLIKEQMIDDPELWPQLKSWRETVANRSIGPRGRDTLDKLMPWLLREFTNLPTPSDALNSVSKVIDQILTRTTYLELLYENPGARQQLVSLCCASPWIAAQLAKFPMLLDELIDPTQLYDTTSLDDYGSELRQYLLRVPEEDMEQQMEALRQFKLSQQLKIAAADVTGVLPVSQVSDHLTLLSEAIIEQVVMQAWQQVTARHGVPAYLEEGVTGFAVIGYGKAGGIELGYGSDLDLVFLHSFSREKYPDQGETDGDRPIEVGHFYLKLAQRILHLFSTRTTSGELYEVDMRLRPSGASGLLVSEIEYFGEYQREEAWTWEHQALVRARFMFGSNGLSSRFSELRSEVLQLARDGSDLAKAVRDMRTKMRDHLLKVKTGHFDLKQSAGGIADIEFIAQYLVLANANQHNELSFWSDNIRIFTGLGELGILAHADVESLIQAYLFLRDESHRQTLQQKPGELPLDLVAEHANRVMDIYQRILVD</sequence>
<proteinExistence type="inferred from homology"/>
<keyword id="KW-0067">ATP-binding</keyword>
<keyword id="KW-0460">Magnesium</keyword>
<keyword id="KW-0511">Multifunctional enzyme</keyword>
<keyword id="KW-0547">Nucleotide-binding</keyword>
<keyword id="KW-0548">Nucleotidyltransferase</keyword>
<keyword id="KW-1185">Reference proteome</keyword>
<keyword id="KW-0808">Transferase</keyword>
<feature type="chain" id="PRO_1000133922" description="Bifunctional glutamine synthetase adenylyltransferase/adenylyl-removing enzyme">
    <location>
        <begin position="1"/>
        <end position="954"/>
    </location>
</feature>
<feature type="region of interest" description="Adenylyl removase" evidence="1">
    <location>
        <begin position="1"/>
        <end position="450"/>
    </location>
</feature>
<feature type="region of interest" description="Adenylyl transferase" evidence="1">
    <location>
        <begin position="454"/>
        <end position="954"/>
    </location>
</feature>
<organism>
    <name type="scientific">Shewanella woodyi (strain ATCC 51908 / MS32)</name>
    <dbReference type="NCBI Taxonomy" id="392500"/>
    <lineage>
        <taxon>Bacteria</taxon>
        <taxon>Pseudomonadati</taxon>
        <taxon>Pseudomonadota</taxon>
        <taxon>Gammaproteobacteria</taxon>
        <taxon>Alteromonadales</taxon>
        <taxon>Shewanellaceae</taxon>
        <taxon>Shewanella</taxon>
    </lineage>
</organism>
<evidence type="ECO:0000255" key="1">
    <source>
        <dbReference type="HAMAP-Rule" id="MF_00802"/>
    </source>
</evidence>
<comment type="function">
    <text evidence="1">Involved in the regulation of glutamine synthetase GlnA, a key enzyme in the process to assimilate ammonia. When cellular nitrogen levels are high, the C-terminal adenylyl transferase (AT) inactivates GlnA by covalent transfer of an adenylyl group from ATP to specific tyrosine residue of GlnA, thus reducing its activity. Conversely, when nitrogen levels are low, the N-terminal adenylyl removase (AR) activates GlnA by removing the adenylyl group by phosphorolysis, increasing its activity. The regulatory region of GlnE binds the signal transduction protein PII (GlnB) which indicates the nitrogen status of the cell.</text>
</comment>
<comment type="catalytic activity">
    <reaction evidence="1">
        <text>[glutamine synthetase]-O(4)-(5'-adenylyl)-L-tyrosine + phosphate = [glutamine synthetase]-L-tyrosine + ADP</text>
        <dbReference type="Rhea" id="RHEA:43716"/>
        <dbReference type="Rhea" id="RHEA-COMP:10660"/>
        <dbReference type="Rhea" id="RHEA-COMP:10661"/>
        <dbReference type="ChEBI" id="CHEBI:43474"/>
        <dbReference type="ChEBI" id="CHEBI:46858"/>
        <dbReference type="ChEBI" id="CHEBI:83624"/>
        <dbReference type="ChEBI" id="CHEBI:456216"/>
        <dbReference type="EC" id="2.7.7.89"/>
    </reaction>
</comment>
<comment type="catalytic activity">
    <reaction evidence="1">
        <text>[glutamine synthetase]-L-tyrosine + ATP = [glutamine synthetase]-O(4)-(5'-adenylyl)-L-tyrosine + diphosphate</text>
        <dbReference type="Rhea" id="RHEA:18589"/>
        <dbReference type="Rhea" id="RHEA-COMP:10660"/>
        <dbReference type="Rhea" id="RHEA-COMP:10661"/>
        <dbReference type="ChEBI" id="CHEBI:30616"/>
        <dbReference type="ChEBI" id="CHEBI:33019"/>
        <dbReference type="ChEBI" id="CHEBI:46858"/>
        <dbReference type="ChEBI" id="CHEBI:83624"/>
        <dbReference type="EC" id="2.7.7.42"/>
    </reaction>
</comment>
<comment type="cofactor">
    <cofactor evidence="1">
        <name>Mg(2+)</name>
        <dbReference type="ChEBI" id="CHEBI:18420"/>
    </cofactor>
</comment>
<comment type="similarity">
    <text evidence="1">Belongs to the GlnE family.</text>
</comment>
<name>GLNE_SHEWM</name>
<reference key="1">
    <citation type="submission" date="2008-02" db="EMBL/GenBank/DDBJ databases">
        <title>Complete sequence of Shewanella woodyi ATCC 51908.</title>
        <authorList>
            <consortium name="US DOE Joint Genome Institute"/>
            <person name="Copeland A."/>
            <person name="Lucas S."/>
            <person name="Lapidus A."/>
            <person name="Glavina del Rio T."/>
            <person name="Dalin E."/>
            <person name="Tice H."/>
            <person name="Bruce D."/>
            <person name="Goodwin L."/>
            <person name="Pitluck S."/>
            <person name="Sims D."/>
            <person name="Brettin T."/>
            <person name="Detter J.C."/>
            <person name="Han C."/>
            <person name="Kuske C.R."/>
            <person name="Schmutz J."/>
            <person name="Larimer F."/>
            <person name="Land M."/>
            <person name="Hauser L."/>
            <person name="Kyrpides N."/>
            <person name="Lykidis A."/>
            <person name="Zhao J.-S."/>
            <person name="Richardson P."/>
        </authorList>
    </citation>
    <scope>NUCLEOTIDE SEQUENCE [LARGE SCALE GENOMIC DNA]</scope>
    <source>
        <strain>ATCC 51908 / MS32</strain>
    </source>
</reference>